<evidence type="ECO:0000250" key="1"/>
<evidence type="ECO:0000255" key="2">
    <source>
        <dbReference type="HAMAP-Rule" id="MF_01163"/>
    </source>
</evidence>
<accession>Q5JFL8</accession>
<feature type="chain" id="PRO_0000348638" description="5-formaminoimidazole-4-carboxamide-1-(beta)-D-ribofuranosyl 5'-monophosphate synthetase">
    <location>
        <begin position="1"/>
        <end position="331"/>
    </location>
</feature>
<feature type="domain" description="ATP-grasp" evidence="2">
    <location>
        <begin position="76"/>
        <end position="322"/>
    </location>
</feature>
<feature type="binding site" evidence="2">
    <location>
        <position position="9"/>
    </location>
    <ligand>
        <name>5-amino-1-(5-phospho-beta-D-ribosyl)imidazole-4-carboxamide</name>
        <dbReference type="ChEBI" id="CHEBI:58475"/>
    </ligand>
</feature>
<feature type="binding site" evidence="2">
    <location>
        <position position="69"/>
    </location>
    <ligand>
        <name>5-amino-1-(5-phospho-beta-D-ribosyl)imidazole-4-carboxamide</name>
        <dbReference type="ChEBI" id="CHEBI:58475"/>
    </ligand>
</feature>
<feature type="binding site" evidence="2">
    <location>
        <begin position="120"/>
        <end position="179"/>
    </location>
    <ligand>
        <name>ATP</name>
        <dbReference type="ChEBI" id="CHEBI:30616"/>
    </ligand>
</feature>
<feature type="binding site" evidence="2">
    <location>
        <position position="201"/>
    </location>
    <ligand>
        <name>ATP</name>
        <dbReference type="ChEBI" id="CHEBI:30616"/>
    </ligand>
</feature>
<feature type="binding site" evidence="2">
    <location>
        <position position="229"/>
    </location>
    <ligand>
        <name>5-amino-1-(5-phospho-beta-D-ribosyl)imidazole-4-carboxamide</name>
        <dbReference type="ChEBI" id="CHEBI:58475"/>
    </ligand>
</feature>
<feature type="binding site" evidence="2">
    <location>
        <position position="267"/>
    </location>
    <ligand>
        <name>Mg(2+)</name>
        <dbReference type="ChEBI" id="CHEBI:18420"/>
    </ligand>
</feature>
<feature type="binding site" evidence="2">
    <location>
        <position position="280"/>
    </location>
    <ligand>
        <name>Mg(2+)</name>
        <dbReference type="ChEBI" id="CHEBI:18420"/>
    </ligand>
</feature>
<proteinExistence type="inferred from homology"/>
<sequence>MRVATYASHSALQILKGAKDEGFETVAFGPSRVKPLYTKYFPVADHFIEGAYPEEELLEFEAVVVPTGSFVAHLGVELVEKMKVPYYGNKAVLRWESDRSLERKWLEKAKLRLPRIYEDPDDIDGPVIVKPFGAGGGRGYFLASSPEDFWKKAERLGVRSKEDLSRVQIQEYVVGVPVYPHYFYSKLNGELELMSVDRRYESNADAIGRIPAREQIDLGISTDYTVVGNIPIVLRESLLMDVIEAGERVVKAAEELMGGLWGPFCLEGVFTPDMEFVVFEISARIVAGTNPFVHGSPYTWLRYDFPVSTGRRIAMELKQGLEEDRLGELLT</sequence>
<protein>
    <recommendedName>
        <fullName evidence="2">5-formaminoimidazole-4-carboxamide-1-(beta)-D-ribofuranosyl 5'-monophosphate synthetase</fullName>
        <ecNumber evidence="2">6.3.4.23</ecNumber>
    </recommendedName>
    <alternativeName>
        <fullName evidence="2">5-aminoimidazole-4-carboxamide-1-beta-D-ribofuranosyl 5'-monophosphate--formate ligase</fullName>
    </alternativeName>
</protein>
<comment type="function">
    <text evidence="2">Catalyzes the ATP- and formate-dependent formylation of 5-aminoimidazole-4-carboxamide-1-beta-d-ribofuranosyl 5'-monophosphate (AICAR) to 5-formaminoimidazole-4-carboxamide-1-beta-d-ribofuranosyl 5'-monophosphate (FAICAR) in the absence of folates.</text>
</comment>
<comment type="catalytic activity">
    <reaction evidence="2">
        <text>5-amino-1-(5-phospho-beta-D-ribosyl)imidazole-4-carboxamide + formate + ATP = 5-formamido-1-(5-phospho-D-ribosyl)imidazole-4-carboxamide + ADP + phosphate</text>
        <dbReference type="Rhea" id="RHEA:24836"/>
        <dbReference type="ChEBI" id="CHEBI:15740"/>
        <dbReference type="ChEBI" id="CHEBI:30616"/>
        <dbReference type="ChEBI" id="CHEBI:43474"/>
        <dbReference type="ChEBI" id="CHEBI:58467"/>
        <dbReference type="ChEBI" id="CHEBI:58475"/>
        <dbReference type="ChEBI" id="CHEBI:456216"/>
        <dbReference type="EC" id="6.3.4.23"/>
    </reaction>
</comment>
<comment type="cofactor">
    <cofactor evidence="1">
        <name>Mg(2+)</name>
        <dbReference type="ChEBI" id="CHEBI:18420"/>
    </cofactor>
    <cofactor evidence="1">
        <name>Mn(2+)</name>
        <dbReference type="ChEBI" id="CHEBI:29035"/>
    </cofactor>
    <text evidence="1">Binds 1 Mg(2+) or Mn(2+) ion per subunit.</text>
</comment>
<comment type="pathway">
    <text evidence="2">Purine metabolism; IMP biosynthesis via de novo pathway; 5-formamido-1-(5-phospho-D-ribosyl)imidazole-4-carboxamide from 5-amino-1-(5-phospho-D-ribosyl)imidazole-4-carboxamide (formate route): step 1/1.</text>
</comment>
<comment type="similarity">
    <text evidence="2">Belongs to the phosphohexose mutase family.</text>
</comment>
<organism>
    <name type="scientific">Thermococcus kodakarensis (strain ATCC BAA-918 / JCM 12380 / KOD1)</name>
    <name type="common">Pyrococcus kodakaraensis (strain KOD1)</name>
    <dbReference type="NCBI Taxonomy" id="69014"/>
    <lineage>
        <taxon>Archaea</taxon>
        <taxon>Methanobacteriati</taxon>
        <taxon>Methanobacteriota</taxon>
        <taxon>Thermococci</taxon>
        <taxon>Thermococcales</taxon>
        <taxon>Thermococcaceae</taxon>
        <taxon>Thermococcus</taxon>
    </lineage>
</organism>
<dbReference type="EC" id="6.3.4.23" evidence="2"/>
<dbReference type="EMBL" id="AP006878">
    <property type="protein sequence ID" value="BAD84385.1"/>
    <property type="molecule type" value="Genomic_DNA"/>
</dbReference>
<dbReference type="RefSeq" id="WP_011249151.1">
    <property type="nucleotide sequence ID" value="NC_006624.1"/>
</dbReference>
<dbReference type="SMR" id="Q5JFL8"/>
<dbReference type="STRING" id="69014.TK0196"/>
<dbReference type="EnsemblBacteria" id="BAD84385">
    <property type="protein sequence ID" value="BAD84385"/>
    <property type="gene ID" value="TK0196"/>
</dbReference>
<dbReference type="GeneID" id="78446700"/>
<dbReference type="KEGG" id="tko:TK0196"/>
<dbReference type="PATRIC" id="fig|69014.16.peg.195"/>
<dbReference type="eggNOG" id="arCOG04346">
    <property type="taxonomic scope" value="Archaea"/>
</dbReference>
<dbReference type="HOGENOM" id="CLU_065084_0_0_2"/>
<dbReference type="InParanoid" id="Q5JFL8"/>
<dbReference type="OrthoDB" id="98133at2157"/>
<dbReference type="PhylomeDB" id="Q5JFL8"/>
<dbReference type="UniPathway" id="UPA00074">
    <property type="reaction ID" value="UER00134"/>
</dbReference>
<dbReference type="Proteomes" id="UP000000536">
    <property type="component" value="Chromosome"/>
</dbReference>
<dbReference type="GO" id="GO:0005524">
    <property type="term" value="F:ATP binding"/>
    <property type="evidence" value="ECO:0007669"/>
    <property type="project" value="UniProtKB-KW"/>
</dbReference>
<dbReference type="GO" id="GO:0016879">
    <property type="term" value="F:ligase activity, forming carbon-nitrogen bonds"/>
    <property type="evidence" value="ECO:0007669"/>
    <property type="project" value="UniProtKB-UniRule"/>
</dbReference>
<dbReference type="GO" id="GO:0000287">
    <property type="term" value="F:magnesium ion binding"/>
    <property type="evidence" value="ECO:0007669"/>
    <property type="project" value="InterPro"/>
</dbReference>
<dbReference type="GO" id="GO:0006189">
    <property type="term" value="P:'de novo' IMP biosynthetic process"/>
    <property type="evidence" value="ECO:0007669"/>
    <property type="project" value="UniProtKB-UniRule"/>
</dbReference>
<dbReference type="Gene3D" id="3.40.50.20">
    <property type="match status" value="1"/>
</dbReference>
<dbReference type="Gene3D" id="3.30.1490.20">
    <property type="entry name" value="ATP-grasp fold, A domain"/>
    <property type="match status" value="1"/>
</dbReference>
<dbReference type="Gene3D" id="3.30.470.20">
    <property type="entry name" value="ATP-grasp fold, B domain"/>
    <property type="match status" value="1"/>
</dbReference>
<dbReference type="HAMAP" id="MF_01163">
    <property type="entry name" value="IMP_biosynth_PurP"/>
    <property type="match status" value="1"/>
</dbReference>
<dbReference type="InterPro" id="IPR011761">
    <property type="entry name" value="ATP-grasp"/>
</dbReference>
<dbReference type="InterPro" id="IPR013815">
    <property type="entry name" value="ATP_grasp_subdomain_1"/>
</dbReference>
<dbReference type="InterPro" id="IPR023656">
    <property type="entry name" value="IMP_biosynth_PurP"/>
</dbReference>
<dbReference type="InterPro" id="IPR009720">
    <property type="entry name" value="IMP_biosynth_PurP_C"/>
</dbReference>
<dbReference type="InterPro" id="IPR010672">
    <property type="entry name" value="IMP_biosynth_PurP_N"/>
</dbReference>
<dbReference type="InterPro" id="IPR016185">
    <property type="entry name" value="PreATP-grasp_dom_sf"/>
</dbReference>
<dbReference type="NCBIfam" id="NF009779">
    <property type="entry name" value="PRK13278.1-3"/>
    <property type="match status" value="1"/>
</dbReference>
<dbReference type="PANTHER" id="PTHR38147:SF2">
    <property type="entry name" value="5-FORMAMINOIMIDAZOLE-4-CARBOXAMIDE-1-(BETA)-D-RIBOFURANOSYL 5'-MONOPHOSPHATE SYNTHETASE"/>
    <property type="match status" value="1"/>
</dbReference>
<dbReference type="PANTHER" id="PTHR38147">
    <property type="entry name" value="5-FORMAMINOIMIDAZOLE-4-CARBOXAMIDE-1-(BETA)-D-RIBOFURANOSYL 5'-MONOPHOSPHATE SYNTHETASE-RELATED"/>
    <property type="match status" value="1"/>
</dbReference>
<dbReference type="Pfam" id="PF06849">
    <property type="entry name" value="DUF1246"/>
    <property type="match status" value="1"/>
</dbReference>
<dbReference type="Pfam" id="PF06973">
    <property type="entry name" value="DUF1297"/>
    <property type="match status" value="1"/>
</dbReference>
<dbReference type="PIRSF" id="PIRSF004602">
    <property type="entry name" value="ATPgrasp_PurP"/>
    <property type="match status" value="1"/>
</dbReference>
<dbReference type="SUPFAM" id="SSF56059">
    <property type="entry name" value="Glutathione synthetase ATP-binding domain-like"/>
    <property type="match status" value="1"/>
</dbReference>
<dbReference type="SUPFAM" id="SSF52440">
    <property type="entry name" value="PreATP-grasp domain"/>
    <property type="match status" value="1"/>
</dbReference>
<dbReference type="PROSITE" id="PS50975">
    <property type="entry name" value="ATP_GRASP"/>
    <property type="match status" value="1"/>
</dbReference>
<gene>
    <name evidence="2" type="primary">purP</name>
    <name type="ordered locus">TK0196</name>
</gene>
<reference key="1">
    <citation type="journal article" date="2005" name="Genome Res.">
        <title>Complete genome sequence of the hyperthermophilic archaeon Thermococcus kodakaraensis KOD1 and comparison with Pyrococcus genomes.</title>
        <authorList>
            <person name="Fukui T."/>
            <person name="Atomi H."/>
            <person name="Kanai T."/>
            <person name="Matsumi R."/>
            <person name="Fujiwara S."/>
            <person name="Imanaka T."/>
        </authorList>
    </citation>
    <scope>NUCLEOTIDE SEQUENCE [LARGE SCALE GENOMIC DNA]</scope>
    <source>
        <strain>ATCC BAA-918 / JCM 12380 / KOD1</strain>
    </source>
</reference>
<name>PURP_THEKO</name>
<keyword id="KW-0067">ATP-binding</keyword>
<keyword id="KW-0436">Ligase</keyword>
<keyword id="KW-0460">Magnesium</keyword>
<keyword id="KW-0464">Manganese</keyword>
<keyword id="KW-0479">Metal-binding</keyword>
<keyword id="KW-0547">Nucleotide-binding</keyword>
<keyword id="KW-0658">Purine biosynthesis</keyword>
<keyword id="KW-1185">Reference proteome</keyword>